<comment type="function">
    <text evidence="5 6">Coreceptor for SEMA3A. Necessary for signaling by class 3 semaphorins and subsequent remodeling of the cytoskeleton. Plays a role in axon guidance in the developing nervous system. Class 3 semaphorins bind to a complex composed of a neuropilin and a plexin. The plexin modulates the affinity of the complex for specific semaphorins, and its cytoplasmic domain is required for the activation of down-stream signaling events in the cytoplasm.</text>
</comment>
<comment type="subunit">
    <text evidence="6">Interacts with NRP1 and NRP2.</text>
</comment>
<comment type="interaction">
    <interactant intactId="EBI-8057809">
        <id>Q80UG2</id>
    </interactant>
    <interactant intactId="EBI-8057848">
        <id>O35464</id>
        <label>Sema6a</label>
    </interactant>
    <organismsDiffer>false</organismsDiffer>
    <experiments>3</experiments>
</comment>
<comment type="subcellular location">
    <subcellularLocation>
        <location evidence="1">Cell membrane</location>
        <topology evidence="1">Single-pass type I membrane protein</topology>
    </subcellularLocation>
</comment>
<comment type="tissue specificity">
    <text evidence="5">Expressed in the developing nervous system. Widely expressed in both the central and peripheral nervous systems. Expressed in the peripheral ganglia, somatosensory, olfactory, visual, auditory and equilibrium systems.</text>
</comment>
<comment type="disruption phenotype">
    <text evidence="6 7">No visible phenotype. Mice exhibit defasciculation of the facial branchiomotor nerve and of the ophthalmic branch of the trigeminus, with variable severity. In mice lacking both Plxna3 and Plxna4, migrating neurons do not show the normal response to Sema3A and Sema3F and do not migrate away from these semaphorins (in vitro).</text>
</comment>
<comment type="similarity">
    <text evidence="8">Belongs to the plexin family.</text>
</comment>
<comment type="sequence caution" evidence="8">
    <conflict type="erroneous initiation">
        <sequence resource="EMBL-CDS" id="BAC56599"/>
    </conflict>
    <text>Truncated N-terminus.</text>
</comment>
<name>PLXA4_MOUSE</name>
<dbReference type="EMBL" id="AB073228">
    <property type="protein sequence ID" value="BAC56599.1"/>
    <property type="status" value="ALT_INIT"/>
    <property type="molecule type" value="mRNA"/>
</dbReference>
<dbReference type="EMBL" id="AC153629">
    <property type="status" value="NOT_ANNOTATED_CDS"/>
    <property type="molecule type" value="Genomic_DNA"/>
</dbReference>
<dbReference type="EMBL" id="AC153867">
    <property type="status" value="NOT_ANNOTATED_CDS"/>
    <property type="molecule type" value="Genomic_DNA"/>
</dbReference>
<dbReference type="EMBL" id="AC158678">
    <property type="status" value="NOT_ANNOTATED_CDS"/>
    <property type="molecule type" value="Genomic_DNA"/>
</dbReference>
<dbReference type="EMBL" id="AK051614">
    <property type="protein sequence ID" value="BAC34692.1"/>
    <property type="molecule type" value="mRNA"/>
</dbReference>
<dbReference type="EMBL" id="AK220402">
    <property type="protein sequence ID" value="BAD90257.1"/>
    <property type="molecule type" value="mRNA"/>
</dbReference>
<dbReference type="CCDS" id="CCDS19985.2"/>
<dbReference type="RefSeq" id="NP_786926.2">
    <property type="nucleotide sequence ID" value="NM_175750.3"/>
</dbReference>
<dbReference type="PDB" id="5L5K">
    <property type="method" value="X-ray"/>
    <property type="resolution" value="7.50 A"/>
    <property type="chains" value="A=36-1229"/>
</dbReference>
<dbReference type="PDB" id="5L5L">
    <property type="method" value="X-ray"/>
    <property type="resolution" value="8.00 A"/>
    <property type="chains" value="A/B=36-1229"/>
</dbReference>
<dbReference type="PDB" id="5L5M">
    <property type="method" value="X-ray"/>
    <property type="resolution" value="8.00 A"/>
    <property type="chains" value="A=36-1229"/>
</dbReference>
<dbReference type="PDB" id="5L5N">
    <property type="method" value="X-ray"/>
    <property type="resolution" value="8.50 A"/>
    <property type="chains" value="A=36-1229"/>
</dbReference>
<dbReference type="PDB" id="7M0R">
    <property type="method" value="EM"/>
    <property type="resolution" value="3.70 A"/>
    <property type="chains" value="A/B=36-1229"/>
</dbReference>
<dbReference type="PDBsum" id="5L5K"/>
<dbReference type="PDBsum" id="5L5L"/>
<dbReference type="PDBsum" id="5L5M"/>
<dbReference type="PDBsum" id="5L5N"/>
<dbReference type="PDBsum" id="7M0R"/>
<dbReference type="EMDB" id="EMD-23613"/>
<dbReference type="SMR" id="Q80UG2"/>
<dbReference type="BioGRID" id="232552">
    <property type="interactions" value="9"/>
</dbReference>
<dbReference type="CORUM" id="Q80UG2"/>
<dbReference type="FunCoup" id="Q80UG2">
    <property type="interactions" value="157"/>
</dbReference>
<dbReference type="IntAct" id="Q80UG2">
    <property type="interactions" value="4"/>
</dbReference>
<dbReference type="MINT" id="Q80UG2"/>
<dbReference type="STRING" id="10090.ENSMUSP00000110748"/>
<dbReference type="GlyConnect" id="2592">
    <property type="glycosylation" value="12 N-Linked glycans (5 sites)"/>
</dbReference>
<dbReference type="GlyCosmos" id="Q80UG2">
    <property type="glycosylation" value="6 sites, 12 glycans"/>
</dbReference>
<dbReference type="GlyGen" id="Q80UG2">
    <property type="glycosylation" value="10 sites, 16 N-linked glycans (8 sites), 1 O-linked glycan (1 site)"/>
</dbReference>
<dbReference type="iPTMnet" id="Q80UG2"/>
<dbReference type="PhosphoSitePlus" id="Q80UG2"/>
<dbReference type="SwissPalm" id="Q80UG2"/>
<dbReference type="jPOST" id="Q80UG2"/>
<dbReference type="PaxDb" id="10090-ENSMUSP00000110748"/>
<dbReference type="ProteomicsDB" id="289632"/>
<dbReference type="Antibodypedia" id="32143">
    <property type="antibodies" value="196 antibodies from 26 providers"/>
</dbReference>
<dbReference type="DNASU" id="243743"/>
<dbReference type="Ensembl" id="ENSMUST00000115096.4">
    <property type="protein sequence ID" value="ENSMUSP00000110748.3"/>
    <property type="gene ID" value="ENSMUSG00000029765.13"/>
</dbReference>
<dbReference type="GeneID" id="243743"/>
<dbReference type="KEGG" id="mmu:243743"/>
<dbReference type="UCSC" id="uc009bgm.3">
    <property type="organism name" value="mouse"/>
</dbReference>
<dbReference type="AGR" id="MGI:2179061"/>
<dbReference type="CTD" id="91584"/>
<dbReference type="MGI" id="MGI:2179061">
    <property type="gene designation" value="Plxna4"/>
</dbReference>
<dbReference type="VEuPathDB" id="HostDB:ENSMUSG00000029765"/>
<dbReference type="eggNOG" id="KOG3610">
    <property type="taxonomic scope" value="Eukaryota"/>
</dbReference>
<dbReference type="GeneTree" id="ENSGT01050000244850"/>
<dbReference type="HOGENOM" id="CLU_001436_2_0_1"/>
<dbReference type="InParanoid" id="Q80UG2"/>
<dbReference type="OMA" id="HESRWLE"/>
<dbReference type="OrthoDB" id="125363at2759"/>
<dbReference type="PhylomeDB" id="Q80UG2"/>
<dbReference type="TreeFam" id="TF312962"/>
<dbReference type="Reactome" id="R-MMU-399954">
    <property type="pathway name" value="Sema3A PAK dependent Axon repulsion"/>
</dbReference>
<dbReference type="Reactome" id="R-MMU-399955">
    <property type="pathway name" value="SEMA3A-Plexin repulsion signaling by inhibiting Integrin adhesion"/>
</dbReference>
<dbReference type="Reactome" id="R-MMU-399956">
    <property type="pathway name" value="CRMPs in Sema3A signaling"/>
</dbReference>
<dbReference type="BioGRID-ORCS" id="243743">
    <property type="hits" value="1 hit in 77 CRISPR screens"/>
</dbReference>
<dbReference type="CD-CODE" id="CE726F99">
    <property type="entry name" value="Postsynaptic density"/>
</dbReference>
<dbReference type="ChiTaRS" id="Plxna4">
    <property type="organism name" value="mouse"/>
</dbReference>
<dbReference type="PRO" id="PR:Q80UG2"/>
<dbReference type="Proteomes" id="UP000000589">
    <property type="component" value="Chromosome 6"/>
</dbReference>
<dbReference type="RNAct" id="Q80UG2">
    <property type="molecule type" value="protein"/>
</dbReference>
<dbReference type="Bgee" id="ENSMUSG00000029765">
    <property type="expression patterns" value="Expressed in superior cervical ganglion and 211 other cell types or tissues"/>
</dbReference>
<dbReference type="GO" id="GO:0150053">
    <property type="term" value="C:cerebellar climbing fiber to Purkinje cell synapse"/>
    <property type="evidence" value="ECO:0000314"/>
    <property type="project" value="SynGO"/>
</dbReference>
<dbReference type="GO" id="GO:0005886">
    <property type="term" value="C:plasma membrane"/>
    <property type="evidence" value="ECO:0000250"/>
    <property type="project" value="MGI"/>
</dbReference>
<dbReference type="GO" id="GO:0017154">
    <property type="term" value="F:semaphorin receptor activity"/>
    <property type="evidence" value="ECO:0000316"/>
    <property type="project" value="MGI"/>
</dbReference>
<dbReference type="GO" id="GO:0021960">
    <property type="term" value="P:anterior commissure morphogenesis"/>
    <property type="evidence" value="ECO:0000315"/>
    <property type="project" value="MGI"/>
</dbReference>
<dbReference type="GO" id="GO:0007411">
    <property type="term" value="P:axon guidance"/>
    <property type="evidence" value="ECO:0000315"/>
    <property type="project" value="MGI"/>
</dbReference>
<dbReference type="GO" id="GO:0021785">
    <property type="term" value="P:branchiomotor neuron axon guidance"/>
    <property type="evidence" value="ECO:0000315"/>
    <property type="project" value="ParkinsonsUK-UCL"/>
</dbReference>
<dbReference type="GO" id="GO:0021793">
    <property type="term" value="P:chemorepulsion of branchiomotor axon"/>
    <property type="evidence" value="ECO:0000315"/>
    <property type="project" value="MGI"/>
</dbReference>
<dbReference type="GO" id="GO:0021602">
    <property type="term" value="P:cranial nerve morphogenesis"/>
    <property type="evidence" value="ECO:0000315"/>
    <property type="project" value="MGI"/>
</dbReference>
<dbReference type="GO" id="GO:0035050">
    <property type="term" value="P:embryonic heart tube development"/>
    <property type="evidence" value="ECO:0000315"/>
    <property type="project" value="MGI"/>
</dbReference>
<dbReference type="GO" id="GO:0021610">
    <property type="term" value="P:facial nerve morphogenesis"/>
    <property type="evidence" value="ECO:0000315"/>
    <property type="project" value="MGI"/>
</dbReference>
<dbReference type="GO" id="GO:0021612">
    <property type="term" value="P:facial nerve structural organization"/>
    <property type="evidence" value="ECO:0000315"/>
    <property type="project" value="ParkinsonsUK-UCL"/>
</dbReference>
<dbReference type="GO" id="GO:0021615">
    <property type="term" value="P:glossopharyngeal nerve morphogenesis"/>
    <property type="evidence" value="ECO:0000315"/>
    <property type="project" value="MGI"/>
</dbReference>
<dbReference type="GO" id="GO:0099558">
    <property type="term" value="P:maintenance of synapse structure"/>
    <property type="evidence" value="ECO:0000314"/>
    <property type="project" value="SynGO"/>
</dbReference>
<dbReference type="GO" id="GO:0008045">
    <property type="term" value="P:motor neuron axon guidance"/>
    <property type="evidence" value="ECO:0000315"/>
    <property type="project" value="ParkinsonsUK-UCL"/>
</dbReference>
<dbReference type="GO" id="GO:0007399">
    <property type="term" value="P:nervous system development"/>
    <property type="evidence" value="ECO:0000316"/>
    <property type="project" value="MGI"/>
</dbReference>
<dbReference type="GO" id="GO:0048812">
    <property type="term" value="P:neuron projection morphogenesis"/>
    <property type="evidence" value="ECO:0000315"/>
    <property type="project" value="MGI"/>
</dbReference>
<dbReference type="GO" id="GO:0021784">
    <property type="term" value="P:postganglionic parasympathetic fiber development"/>
    <property type="evidence" value="ECO:0000315"/>
    <property type="project" value="MGI"/>
</dbReference>
<dbReference type="GO" id="GO:0048841">
    <property type="term" value="P:regulation of axon extension involved in axon guidance"/>
    <property type="evidence" value="ECO:0000315"/>
    <property type="project" value="MGI"/>
</dbReference>
<dbReference type="GO" id="GO:0050923">
    <property type="term" value="P:regulation of negative chemotaxis"/>
    <property type="evidence" value="ECO:0000315"/>
    <property type="project" value="MGI"/>
</dbReference>
<dbReference type="GO" id="GO:0071526">
    <property type="term" value="P:semaphorin-plexin signaling pathway"/>
    <property type="evidence" value="ECO:0000315"/>
    <property type="project" value="ParkinsonsUK-UCL"/>
</dbReference>
<dbReference type="GO" id="GO:0048485">
    <property type="term" value="P:sympathetic nervous system development"/>
    <property type="evidence" value="ECO:0000315"/>
    <property type="project" value="MGI"/>
</dbReference>
<dbReference type="GO" id="GO:0097492">
    <property type="term" value="P:sympathetic neuron axon guidance"/>
    <property type="evidence" value="ECO:0000316"/>
    <property type="project" value="MGI"/>
</dbReference>
<dbReference type="GO" id="GO:0021636">
    <property type="term" value="P:trigeminal nerve morphogenesis"/>
    <property type="evidence" value="ECO:0000315"/>
    <property type="project" value="MGI"/>
</dbReference>
<dbReference type="GO" id="GO:0021637">
    <property type="term" value="P:trigeminal nerve structural organization"/>
    <property type="evidence" value="ECO:0000315"/>
    <property type="project" value="ParkinsonsUK-UCL"/>
</dbReference>
<dbReference type="GO" id="GO:0021644">
    <property type="term" value="P:vagus nerve morphogenesis"/>
    <property type="evidence" value="ECO:0000315"/>
    <property type="project" value="MGI"/>
</dbReference>
<dbReference type="CDD" id="cd00603">
    <property type="entry name" value="IPT_PCSR"/>
    <property type="match status" value="1"/>
</dbReference>
<dbReference type="CDD" id="cd01180">
    <property type="entry name" value="IPT_plexin_repeat1"/>
    <property type="match status" value="1"/>
</dbReference>
<dbReference type="CDD" id="cd01179">
    <property type="entry name" value="IPT_plexin_repeat2"/>
    <property type="match status" value="1"/>
</dbReference>
<dbReference type="CDD" id="cd01181">
    <property type="entry name" value="IPT_plexin_repeat3"/>
    <property type="match status" value="1"/>
</dbReference>
<dbReference type="CDD" id="cd12790">
    <property type="entry name" value="RasGAP_plexin_A"/>
    <property type="match status" value="1"/>
</dbReference>
<dbReference type="CDD" id="cd11274">
    <property type="entry name" value="Sema_plexin_A4"/>
    <property type="match status" value="1"/>
</dbReference>
<dbReference type="DisProt" id="DP02528"/>
<dbReference type="FunFam" id="1.10.506.10:FF:000005">
    <property type="entry name" value="Plexin A1"/>
    <property type="match status" value="1"/>
</dbReference>
<dbReference type="FunFam" id="1.10.506.10:FF:000006">
    <property type="entry name" value="Plexin A1"/>
    <property type="match status" value="1"/>
</dbReference>
<dbReference type="FunFam" id="2.60.40.10:FF:000123">
    <property type="entry name" value="Plexin A1"/>
    <property type="match status" value="1"/>
</dbReference>
<dbReference type="FunFam" id="2.130.10.10:FF:000006">
    <property type="entry name" value="Plexin A2"/>
    <property type="match status" value="1"/>
</dbReference>
<dbReference type="FunFam" id="2.60.40.10:FF:000071">
    <property type="entry name" value="Plexin A2"/>
    <property type="match status" value="1"/>
</dbReference>
<dbReference type="FunFam" id="2.60.40.10:FF:000339">
    <property type="entry name" value="Plexin A2"/>
    <property type="match status" value="1"/>
</dbReference>
<dbReference type="FunFam" id="3.10.20.90:FF:000018">
    <property type="entry name" value="Plexin A2"/>
    <property type="match status" value="1"/>
</dbReference>
<dbReference type="FunFam" id="3.30.1680.10:FF:000032">
    <property type="entry name" value="Plexin A2"/>
    <property type="match status" value="1"/>
</dbReference>
<dbReference type="FunFam" id="2.60.40.10:FF:000329">
    <property type="entry name" value="Plexin A4"/>
    <property type="match status" value="1"/>
</dbReference>
<dbReference type="FunFam" id="2.60.40.10:FF:001973">
    <property type="entry name" value="Plexin A4, B"/>
    <property type="match status" value="1"/>
</dbReference>
<dbReference type="Gene3D" id="1.10.506.10">
    <property type="entry name" value="GTPase Activation - p120gap, domain 1"/>
    <property type="match status" value="1"/>
</dbReference>
<dbReference type="Gene3D" id="2.60.40.10">
    <property type="entry name" value="Immunoglobulins"/>
    <property type="match status" value="5"/>
</dbReference>
<dbReference type="Gene3D" id="3.10.20.90">
    <property type="entry name" value="Phosphatidylinositol 3-kinase Catalytic Subunit, Chain A, domain 1"/>
    <property type="match status" value="1"/>
</dbReference>
<dbReference type="Gene3D" id="2.130.10.10">
    <property type="entry name" value="YVTN repeat-like/Quinoprotein amine dehydrogenase"/>
    <property type="match status" value="1"/>
</dbReference>
<dbReference type="InterPro" id="IPR013783">
    <property type="entry name" value="Ig-like_fold"/>
</dbReference>
<dbReference type="InterPro" id="IPR014756">
    <property type="entry name" value="Ig_E-set"/>
</dbReference>
<dbReference type="InterPro" id="IPR002909">
    <property type="entry name" value="IPT_dom"/>
</dbReference>
<dbReference type="InterPro" id="IPR031148">
    <property type="entry name" value="Plexin"/>
</dbReference>
<dbReference type="InterPro" id="IPR013548">
    <property type="entry name" value="Plexin_cytoplasmic_RasGAP_dom"/>
</dbReference>
<dbReference type="InterPro" id="IPR046800">
    <property type="entry name" value="Plexin_RBD"/>
</dbReference>
<dbReference type="InterPro" id="IPR002165">
    <property type="entry name" value="Plexin_repeat"/>
</dbReference>
<dbReference type="InterPro" id="IPR016201">
    <property type="entry name" value="PSI"/>
</dbReference>
<dbReference type="InterPro" id="IPR008936">
    <property type="entry name" value="Rho_GTPase_activation_prot"/>
</dbReference>
<dbReference type="InterPro" id="IPR001627">
    <property type="entry name" value="Semap_dom"/>
</dbReference>
<dbReference type="InterPro" id="IPR036352">
    <property type="entry name" value="Semap_dom_sf"/>
</dbReference>
<dbReference type="InterPro" id="IPR041019">
    <property type="entry name" value="TIG1_plexin"/>
</dbReference>
<dbReference type="InterPro" id="IPR041362">
    <property type="entry name" value="TIG2_plexin"/>
</dbReference>
<dbReference type="InterPro" id="IPR015943">
    <property type="entry name" value="WD40/YVTN_repeat-like_dom_sf"/>
</dbReference>
<dbReference type="PANTHER" id="PTHR22625">
    <property type="entry name" value="PLEXIN"/>
    <property type="match status" value="1"/>
</dbReference>
<dbReference type="PANTHER" id="PTHR22625:SF34">
    <property type="entry name" value="PLEXIN-A4"/>
    <property type="match status" value="1"/>
</dbReference>
<dbReference type="Pfam" id="PF08337">
    <property type="entry name" value="Plexin_cytopl"/>
    <property type="match status" value="1"/>
</dbReference>
<dbReference type="Pfam" id="PF20170">
    <property type="entry name" value="Plexin_RBD"/>
    <property type="match status" value="1"/>
</dbReference>
<dbReference type="Pfam" id="PF01437">
    <property type="entry name" value="PSI"/>
    <property type="match status" value="2"/>
</dbReference>
<dbReference type="Pfam" id="PF24479">
    <property type="entry name" value="PSI_PlexinA-B"/>
    <property type="match status" value="1"/>
</dbReference>
<dbReference type="Pfam" id="PF01403">
    <property type="entry name" value="Sema"/>
    <property type="match status" value="1"/>
</dbReference>
<dbReference type="Pfam" id="PF01833">
    <property type="entry name" value="TIG"/>
    <property type="match status" value="4"/>
</dbReference>
<dbReference type="Pfam" id="PF18020">
    <property type="entry name" value="TIG_2"/>
    <property type="match status" value="1"/>
</dbReference>
<dbReference type="Pfam" id="PF17960">
    <property type="entry name" value="TIG_plexin"/>
    <property type="match status" value="1"/>
</dbReference>
<dbReference type="SMART" id="SM00429">
    <property type="entry name" value="IPT"/>
    <property type="match status" value="4"/>
</dbReference>
<dbReference type="SMART" id="SM00423">
    <property type="entry name" value="PSI"/>
    <property type="match status" value="3"/>
</dbReference>
<dbReference type="SMART" id="SM00630">
    <property type="entry name" value="Sema"/>
    <property type="match status" value="1"/>
</dbReference>
<dbReference type="SUPFAM" id="SSF81296">
    <property type="entry name" value="E set domains"/>
    <property type="match status" value="4"/>
</dbReference>
<dbReference type="SUPFAM" id="SSF48350">
    <property type="entry name" value="GTPase activation domain, GAP"/>
    <property type="match status" value="1"/>
</dbReference>
<dbReference type="SUPFAM" id="SSF103575">
    <property type="entry name" value="Plexin repeat"/>
    <property type="match status" value="1"/>
</dbReference>
<dbReference type="SUPFAM" id="SSF101912">
    <property type="entry name" value="Sema domain"/>
    <property type="match status" value="1"/>
</dbReference>
<dbReference type="PROSITE" id="PS51004">
    <property type="entry name" value="SEMA"/>
    <property type="match status" value="1"/>
</dbReference>
<protein>
    <recommendedName>
        <fullName>Plexin-A4</fullName>
    </recommendedName>
</protein>
<organism>
    <name type="scientific">Mus musculus</name>
    <name type="common">Mouse</name>
    <dbReference type="NCBI Taxonomy" id="10090"/>
    <lineage>
        <taxon>Eukaryota</taxon>
        <taxon>Metazoa</taxon>
        <taxon>Chordata</taxon>
        <taxon>Craniata</taxon>
        <taxon>Vertebrata</taxon>
        <taxon>Euteleostomi</taxon>
        <taxon>Mammalia</taxon>
        <taxon>Eutheria</taxon>
        <taxon>Euarchontoglires</taxon>
        <taxon>Glires</taxon>
        <taxon>Rodentia</taxon>
        <taxon>Myomorpha</taxon>
        <taxon>Muroidea</taxon>
        <taxon>Muridae</taxon>
        <taxon>Murinae</taxon>
        <taxon>Mus</taxon>
        <taxon>Mus</taxon>
    </lineage>
</organism>
<reference key="1">
    <citation type="journal article" date="2003" name="Mech. Dev.">
        <title>Identification and characterization of a novel mouse plexin, plexin-A4.</title>
        <authorList>
            <person name="Suto F."/>
            <person name="Murakami Y."/>
            <person name="Nakamura F."/>
            <person name="Goshima Y."/>
            <person name="Fujisawa H."/>
        </authorList>
    </citation>
    <scope>NUCLEOTIDE SEQUENCE [MRNA]</scope>
    <scope>FUNCTION</scope>
    <scope>TISSUE SPECIFICITY</scope>
    <source>
        <tissue>Embryonic brain</tissue>
    </source>
</reference>
<reference key="2">
    <citation type="journal article" date="2009" name="PLoS Biol.">
        <title>Lineage-specific biology revealed by a finished genome assembly of the mouse.</title>
        <authorList>
            <person name="Church D.M."/>
            <person name="Goodstadt L."/>
            <person name="Hillier L.W."/>
            <person name="Zody M.C."/>
            <person name="Goldstein S."/>
            <person name="She X."/>
            <person name="Bult C.J."/>
            <person name="Agarwala R."/>
            <person name="Cherry J.L."/>
            <person name="DiCuccio M."/>
            <person name="Hlavina W."/>
            <person name="Kapustin Y."/>
            <person name="Meric P."/>
            <person name="Maglott D."/>
            <person name="Birtle Z."/>
            <person name="Marques A.C."/>
            <person name="Graves T."/>
            <person name="Zhou S."/>
            <person name="Teague B."/>
            <person name="Potamousis K."/>
            <person name="Churas C."/>
            <person name="Place M."/>
            <person name="Herschleb J."/>
            <person name="Runnheim R."/>
            <person name="Forrest D."/>
            <person name="Amos-Landgraf J."/>
            <person name="Schwartz D.C."/>
            <person name="Cheng Z."/>
            <person name="Lindblad-Toh K."/>
            <person name="Eichler E.E."/>
            <person name="Ponting C.P."/>
        </authorList>
    </citation>
    <scope>NUCLEOTIDE SEQUENCE [LARGE SCALE GENOMIC DNA]</scope>
    <source>
        <strain>C57BL/6J</strain>
    </source>
</reference>
<reference key="3">
    <citation type="journal article" date="2005" name="Science">
        <title>The transcriptional landscape of the mammalian genome.</title>
        <authorList>
            <person name="Carninci P."/>
            <person name="Kasukawa T."/>
            <person name="Katayama S."/>
            <person name="Gough J."/>
            <person name="Frith M.C."/>
            <person name="Maeda N."/>
            <person name="Oyama R."/>
            <person name="Ravasi T."/>
            <person name="Lenhard B."/>
            <person name="Wells C."/>
            <person name="Kodzius R."/>
            <person name="Shimokawa K."/>
            <person name="Bajic V.B."/>
            <person name="Brenner S.E."/>
            <person name="Batalov S."/>
            <person name="Forrest A.R."/>
            <person name="Zavolan M."/>
            <person name="Davis M.J."/>
            <person name="Wilming L.G."/>
            <person name="Aidinis V."/>
            <person name="Allen J.E."/>
            <person name="Ambesi-Impiombato A."/>
            <person name="Apweiler R."/>
            <person name="Aturaliya R.N."/>
            <person name="Bailey T.L."/>
            <person name="Bansal M."/>
            <person name="Baxter L."/>
            <person name="Beisel K.W."/>
            <person name="Bersano T."/>
            <person name="Bono H."/>
            <person name="Chalk A.M."/>
            <person name="Chiu K.P."/>
            <person name="Choudhary V."/>
            <person name="Christoffels A."/>
            <person name="Clutterbuck D.R."/>
            <person name="Crowe M.L."/>
            <person name="Dalla E."/>
            <person name="Dalrymple B.P."/>
            <person name="de Bono B."/>
            <person name="Della Gatta G."/>
            <person name="di Bernardo D."/>
            <person name="Down T."/>
            <person name="Engstrom P."/>
            <person name="Fagiolini M."/>
            <person name="Faulkner G."/>
            <person name="Fletcher C.F."/>
            <person name="Fukushima T."/>
            <person name="Furuno M."/>
            <person name="Futaki S."/>
            <person name="Gariboldi M."/>
            <person name="Georgii-Hemming P."/>
            <person name="Gingeras T.R."/>
            <person name="Gojobori T."/>
            <person name="Green R.E."/>
            <person name="Gustincich S."/>
            <person name="Harbers M."/>
            <person name="Hayashi Y."/>
            <person name="Hensch T.K."/>
            <person name="Hirokawa N."/>
            <person name="Hill D."/>
            <person name="Huminiecki L."/>
            <person name="Iacono M."/>
            <person name="Ikeo K."/>
            <person name="Iwama A."/>
            <person name="Ishikawa T."/>
            <person name="Jakt M."/>
            <person name="Kanapin A."/>
            <person name="Katoh M."/>
            <person name="Kawasawa Y."/>
            <person name="Kelso J."/>
            <person name="Kitamura H."/>
            <person name="Kitano H."/>
            <person name="Kollias G."/>
            <person name="Krishnan S.P."/>
            <person name="Kruger A."/>
            <person name="Kummerfeld S.K."/>
            <person name="Kurochkin I.V."/>
            <person name="Lareau L.F."/>
            <person name="Lazarevic D."/>
            <person name="Lipovich L."/>
            <person name="Liu J."/>
            <person name="Liuni S."/>
            <person name="McWilliam S."/>
            <person name="Madan Babu M."/>
            <person name="Madera M."/>
            <person name="Marchionni L."/>
            <person name="Matsuda H."/>
            <person name="Matsuzawa S."/>
            <person name="Miki H."/>
            <person name="Mignone F."/>
            <person name="Miyake S."/>
            <person name="Morris K."/>
            <person name="Mottagui-Tabar S."/>
            <person name="Mulder N."/>
            <person name="Nakano N."/>
            <person name="Nakauchi H."/>
            <person name="Ng P."/>
            <person name="Nilsson R."/>
            <person name="Nishiguchi S."/>
            <person name="Nishikawa S."/>
            <person name="Nori F."/>
            <person name="Ohara O."/>
            <person name="Okazaki Y."/>
            <person name="Orlando V."/>
            <person name="Pang K.C."/>
            <person name="Pavan W.J."/>
            <person name="Pavesi G."/>
            <person name="Pesole G."/>
            <person name="Petrovsky N."/>
            <person name="Piazza S."/>
            <person name="Reed J."/>
            <person name="Reid J.F."/>
            <person name="Ring B.Z."/>
            <person name="Ringwald M."/>
            <person name="Rost B."/>
            <person name="Ruan Y."/>
            <person name="Salzberg S.L."/>
            <person name="Sandelin A."/>
            <person name="Schneider C."/>
            <person name="Schoenbach C."/>
            <person name="Sekiguchi K."/>
            <person name="Semple C.A."/>
            <person name="Seno S."/>
            <person name="Sessa L."/>
            <person name="Sheng Y."/>
            <person name="Shibata Y."/>
            <person name="Shimada H."/>
            <person name="Shimada K."/>
            <person name="Silva D."/>
            <person name="Sinclair B."/>
            <person name="Sperling S."/>
            <person name="Stupka E."/>
            <person name="Sugiura K."/>
            <person name="Sultana R."/>
            <person name="Takenaka Y."/>
            <person name="Taki K."/>
            <person name="Tammoja K."/>
            <person name="Tan S.L."/>
            <person name="Tang S."/>
            <person name="Taylor M.S."/>
            <person name="Tegner J."/>
            <person name="Teichmann S.A."/>
            <person name="Ueda H.R."/>
            <person name="van Nimwegen E."/>
            <person name="Verardo R."/>
            <person name="Wei C.L."/>
            <person name="Yagi K."/>
            <person name="Yamanishi H."/>
            <person name="Zabarovsky E."/>
            <person name="Zhu S."/>
            <person name="Zimmer A."/>
            <person name="Hide W."/>
            <person name="Bult C."/>
            <person name="Grimmond S.M."/>
            <person name="Teasdale R.D."/>
            <person name="Liu E.T."/>
            <person name="Brusic V."/>
            <person name="Quackenbush J."/>
            <person name="Wahlestedt C."/>
            <person name="Mattick J.S."/>
            <person name="Hume D.A."/>
            <person name="Kai C."/>
            <person name="Sasaki D."/>
            <person name="Tomaru Y."/>
            <person name="Fukuda S."/>
            <person name="Kanamori-Katayama M."/>
            <person name="Suzuki M."/>
            <person name="Aoki J."/>
            <person name="Arakawa T."/>
            <person name="Iida J."/>
            <person name="Imamura K."/>
            <person name="Itoh M."/>
            <person name="Kato T."/>
            <person name="Kawaji H."/>
            <person name="Kawagashira N."/>
            <person name="Kawashima T."/>
            <person name="Kojima M."/>
            <person name="Kondo S."/>
            <person name="Konno H."/>
            <person name="Nakano K."/>
            <person name="Ninomiya N."/>
            <person name="Nishio T."/>
            <person name="Okada M."/>
            <person name="Plessy C."/>
            <person name="Shibata K."/>
            <person name="Shiraki T."/>
            <person name="Suzuki S."/>
            <person name="Tagami M."/>
            <person name="Waki K."/>
            <person name="Watahiki A."/>
            <person name="Okamura-Oho Y."/>
            <person name="Suzuki H."/>
            <person name="Kawai J."/>
            <person name="Hayashizaki Y."/>
        </authorList>
    </citation>
    <scope>NUCLEOTIDE SEQUENCE [LARGE SCALE MRNA] OF 1042-1893</scope>
    <source>
        <strain>C57BL/6J</strain>
        <tissue>Spinal ganglion</tissue>
    </source>
</reference>
<reference key="4">
    <citation type="submission" date="2005-02" db="EMBL/GenBank/DDBJ databases">
        <title>Prediction of the coding sequences of mouse homologues of KIAA gene. The complete nucleotide sequences of mouse KIAA-homologous cDNAs identified by screening of terminal sequences of cDNA clones randomly sampled from size-fractionated libraries.</title>
        <authorList>
            <person name="Okazaki N."/>
            <person name="Kikuno R.F."/>
            <person name="Ohara R."/>
            <person name="Inamoto S."/>
            <person name="Nagase T."/>
            <person name="Ohara O."/>
            <person name="Koga H."/>
        </authorList>
    </citation>
    <scope>NUCLEOTIDE SEQUENCE [LARGE SCALE MRNA] OF 1695-1893</scope>
    <source>
        <tissue>Fetal brain</tissue>
    </source>
</reference>
<reference key="5">
    <citation type="journal article" date="2006" name="Mol. Cell. Proteomics">
        <title>Comprehensive identification of phosphorylation sites in postsynaptic density preparations.</title>
        <authorList>
            <person name="Trinidad J.C."/>
            <person name="Specht C.G."/>
            <person name="Thalhammer A."/>
            <person name="Schoepfer R."/>
            <person name="Burlingame A.L."/>
        </authorList>
    </citation>
    <scope>IDENTIFICATION BY MASS SPECTROMETRY [LARGE SCALE ANALYSIS]</scope>
    <source>
        <tissue>Brain</tissue>
    </source>
</reference>
<reference key="6">
    <citation type="journal article" date="2008" name="Dev. Biol.">
        <title>Plexin A3 and plexin A4 convey semaphorin signals during facial nerve development.</title>
        <authorList>
            <person name="Schwarz Q."/>
            <person name="Waimey K.E."/>
            <person name="Golding M."/>
            <person name="Takamatsu H."/>
            <person name="Kumanogoh A."/>
            <person name="Fujisawa H."/>
            <person name="Cheng H.J."/>
            <person name="Ruhrberg C."/>
        </authorList>
    </citation>
    <scope>DISRUPTION PHENOTYPE</scope>
</reference>
<reference key="7">
    <citation type="journal article" date="2008" name="Dev. Biol.">
        <title>Plexin-A3 and plexin-A4 restrict the migration of sympathetic neurons but not their neural crest precursors.</title>
        <authorList>
            <person name="Waimey K.E."/>
            <person name="Huang P.H."/>
            <person name="Chen M."/>
            <person name="Cheng H.J."/>
        </authorList>
    </citation>
    <scope>DISRUPTION PHENOTYPE</scope>
    <scope>INTERACTION WITH NRP1 AND NRP2</scope>
    <scope>FUNCTION</scope>
</reference>
<reference key="8">
    <citation type="journal article" date="2010" name="Cell">
        <title>A tissue-specific atlas of mouse protein phosphorylation and expression.</title>
        <authorList>
            <person name="Huttlin E.L."/>
            <person name="Jedrychowski M.P."/>
            <person name="Elias J.E."/>
            <person name="Goswami T."/>
            <person name="Rad R."/>
            <person name="Beausoleil S.A."/>
            <person name="Villen J."/>
            <person name="Haas W."/>
            <person name="Sowa M.E."/>
            <person name="Gygi S.P."/>
        </authorList>
    </citation>
    <scope>IDENTIFICATION BY MASS SPECTROMETRY [LARGE SCALE ANALYSIS]</scope>
    <source>
        <tissue>Brain</tissue>
        <tissue>Lung</tissue>
    </source>
</reference>
<proteinExistence type="evidence at protein level"/>
<accession>Q80UG2</accession>
<accession>E9QN64</accession>
<accession>Q5DTW8</accession>
<accession>Q8BKK9</accession>
<evidence type="ECO:0000250" key="1"/>
<evidence type="ECO:0000250" key="2">
    <source>
        <dbReference type="UniProtKB" id="Q9HCM2"/>
    </source>
</evidence>
<evidence type="ECO:0000255" key="3"/>
<evidence type="ECO:0000255" key="4">
    <source>
        <dbReference type="PROSITE-ProRule" id="PRU00352"/>
    </source>
</evidence>
<evidence type="ECO:0000269" key="5">
    <source>
    </source>
</evidence>
<evidence type="ECO:0000269" key="6">
    <source>
    </source>
</evidence>
<evidence type="ECO:0000269" key="7">
    <source>
    </source>
</evidence>
<evidence type="ECO:0000305" key="8"/>
<keyword id="KW-0002">3D-structure</keyword>
<keyword id="KW-0007">Acetylation</keyword>
<keyword id="KW-1003">Cell membrane</keyword>
<keyword id="KW-1015">Disulfide bond</keyword>
<keyword id="KW-0325">Glycoprotein</keyword>
<keyword id="KW-0472">Membrane</keyword>
<keyword id="KW-0675">Receptor</keyword>
<keyword id="KW-1185">Reference proteome</keyword>
<keyword id="KW-0677">Repeat</keyword>
<keyword id="KW-0732">Signal</keyword>
<keyword id="KW-0812">Transmembrane</keyword>
<keyword id="KW-1133">Transmembrane helix</keyword>
<sequence length="1893" mass="212560">MKAMPWNWTCLLSHLLVVGMGSSTLLPRQPPQLSQKPSFVTFRGEPAEGFNHLVVDERTGHIYLGAVNRIYKLSSDLKVLVTHQTGPDEDNPKCYPPRIVQTCNEPLASTNNVNKMLLIDYKENRLIACGSLYQGICKLLRLEDLFKLGEPFHKKEHYLSGVNESGSVFGVIVSYSNFDDKLFIATAVDGKPEYFPTISSRKLTKNSEADGMFAYVFHDEFVASMIKIPSDTFTVIPDFDIYYVYGFSSGNFVYFLTLQPEMVSPPGSTTKEQVYTSKLVRLCKEDTAFNSYVEVPIGCERNGVEYRLLQAAYLSKAGAVLGRTLGVRPDDDLLFTVFSKGQKRKMKSLDESALCIFILKQINDRIKDRLQSCYRGEGTLDLAWLKVKDIPCSSALLTIDDNFCGLDMNAPLGVSEMVRGIPVFTEDRDRMTSVIAYVYKNHSLAFVGTKSGKLKKIRVDGPKGNALQYETVQVVDSGPVLRDMAFSKDHEQLYIMSERQLTRVPVESCGQYRSCGECLGSGDPHCGWCVLHNTCTRKERCERSREPRRFASEMKQCVRLTVHPNNISVSQYNVLLVLETYNVPELSAGVNCTFEDLSEMDGLVIGNQIQCYSPAAKEVPRIITENGDHHVVQLQLKSKETGMTFASTSFVFYNCSVHNSCLSCVESPYRCHWCKYRHVCTHDPNTCSFQEGRVKLPEDCPQLLRVDKILVPVEVIKPITLKAKNLPQPQSGQRGYECILNIQGIEQRVPALRFNSSSVQCQNTSYSYEGMEINNLPVELTVVWNGHFNIDNPAQNKVYLYKCGAMRESCGLCLKADPDFECGWCQSPGQCTLRQHCPAHESRWLELSGANSKCTNPRITEIIPVTGPREGGTKVTIRGENLGLEFRDIASHVKVAGVECSPLVDGYIPAEQIVCEMGEAKPSQHAGFVEICVAVCRPEFMARSSQLYYFMTLTLADLKPNRGPMSGGTQVTITGTNLNAGSNVVVMFGSQPCLFHRRSPSYIICNTTSSEEVLDMKVTVQVDRARIRQDLVFQYVEDPTIVRIEPEWSIVSGNTPIAVWGTHLDLIQNPQIRAKHGGKEHINICEVLNATEMTCQAPALALGPDHQSDLTERPEEFGFILDNVQSLLILNKTNFTYYPNPVFEAFSPSGILELKPGTPIILKGKNLIPPVAGGNVKLNYTVLVGEKPCTVTVSDVQLLCESPNLIGRHKVMARVGGMEYSPGMVYIAPDSPLSLPAIVSIAVAGGLLIIFIVAVLIAYKRKSRESDLTLKRLQMQMDNLESRVALECKEAFAELQTDIHELTSDLDGAGIPFLDYRTYTMRVLFPGIEDHPVLRDLEVPGYRQERVEKGLKLFAQLINNKVFLLSFIRTLESQRSFSMRDRGNVASLIMTVLQSKLEYATDVLKQLLADLIDKNLESKNHPKLLLRRTESVAEKMLTNWFTFLLYKFLKECAGEPLFSLFCAIKQQMEKGPIDAITGEARYSLSEDKLIRQQIEYKTLVLSCVSPDNVNSPEVPVKILNCDTITQVKEKILDAIFKNVPCSHRPKAADMDLEWRQGSGARMILQDEDITTKIENDWKRLNTVAHYQVPDGSVVALVSKQVTAYNAVNNSTVSRTSASKYENMIRYTGSPDSLRSRTPMITPDLESGVKLWHLVKNHEHGDQKEGDRGSKMVSEIYLTRLLATKGTLQKFVDDLFETIFSTAHRGSALPLAIKYMFDFLDEQADKHGIHDPHVRHTWKSNCLPLRFWVNMIKNPQFVFDIHKNSITDACLSVVAQTFMDSCSTSEHRLGKDSPSNKLLYAKDIPSYKNWVERYYSDIGKMPAISDQDMNAYLAEQSRMHMNEFNTMSALSEIFSYVGKYSEEILGPLDHDDQCGKQKLAYKLEQVITLMSLDS</sequence>
<gene>
    <name type="primary">Plxna4</name>
    <name type="synonym">Kiaa1550</name>
</gene>
<feature type="signal peptide" evidence="3">
    <location>
        <begin position="1"/>
        <end position="23"/>
    </location>
</feature>
<feature type="chain" id="PRO_0000240284" description="Plexin-A4">
    <location>
        <begin position="24"/>
        <end position="1893"/>
    </location>
</feature>
<feature type="topological domain" description="Extracellular" evidence="3">
    <location>
        <begin position="24"/>
        <end position="1236"/>
    </location>
</feature>
<feature type="transmembrane region" description="Helical" evidence="3">
    <location>
        <begin position="1237"/>
        <end position="1257"/>
    </location>
</feature>
<feature type="topological domain" description="Cytoplasmic" evidence="3">
    <location>
        <begin position="1258"/>
        <end position="1893"/>
    </location>
</feature>
<feature type="domain" description="Sema" evidence="4">
    <location>
        <begin position="24"/>
        <end position="506"/>
    </location>
</feature>
<feature type="domain" description="PSI 1">
    <location>
        <begin position="508"/>
        <end position="558"/>
    </location>
</feature>
<feature type="domain" description="PSI 2">
    <location>
        <begin position="654"/>
        <end position="701"/>
    </location>
</feature>
<feature type="domain" description="PSI 3">
    <location>
        <begin position="802"/>
        <end position="855"/>
    </location>
</feature>
<feature type="domain" description="IPT/TIG 1">
    <location>
        <begin position="857"/>
        <end position="951"/>
    </location>
</feature>
<feature type="domain" description="IPT/TIG 2">
    <location>
        <begin position="953"/>
        <end position="1036"/>
    </location>
</feature>
<feature type="domain" description="IPT/TIG 3">
    <location>
        <begin position="1039"/>
        <end position="1138"/>
    </location>
</feature>
<feature type="domain" description="IPT/TIG 4">
    <location>
        <begin position="1141"/>
        <end position="1229"/>
    </location>
</feature>
<feature type="modified residue" description="N6-acetyllysine" evidence="2">
    <location>
        <position position="1349"/>
    </location>
</feature>
<feature type="glycosylation site" description="N-linked (GlcNAc...) asparagine" evidence="3">
    <location>
        <position position="654"/>
    </location>
</feature>
<feature type="glycosylation site" description="N-linked (GlcNAc...) asparagine" evidence="3">
    <location>
        <position position="1006"/>
    </location>
</feature>
<feature type="glycosylation site" description="N-linked (GlcNAc...) asparagine" evidence="3">
    <location>
        <position position="1131"/>
    </location>
</feature>
<feature type="glycosylation site" description="N-linked (GlcNAc...) asparagine" evidence="3">
    <location>
        <position position="1179"/>
    </location>
</feature>
<feature type="disulfide bond" evidence="4">
    <location>
        <begin position="94"/>
        <end position="103"/>
    </location>
</feature>
<feature type="disulfide bond" evidence="4">
    <location>
        <begin position="129"/>
        <end position="137"/>
    </location>
</feature>
<feature type="disulfide bond" evidence="4">
    <location>
        <begin position="283"/>
        <end position="404"/>
    </location>
</feature>
<feature type="disulfide bond" evidence="4">
    <location>
        <begin position="299"/>
        <end position="355"/>
    </location>
</feature>
<feature type="disulfide bond" evidence="4">
    <location>
        <begin position="373"/>
        <end position="392"/>
    </location>
</feature>
<feature type="disulfide bond" evidence="4">
    <location>
        <begin position="509"/>
        <end position="526"/>
    </location>
</feature>
<feature type="disulfide bond" evidence="4">
    <location>
        <begin position="515"/>
        <end position="557"/>
    </location>
</feature>
<feature type="disulfide bond" evidence="4">
    <location>
        <begin position="518"/>
        <end position="535"/>
    </location>
</feature>
<feature type="disulfide bond" evidence="4">
    <location>
        <begin position="529"/>
        <end position="541"/>
    </location>
</feature>
<feature type="disulfide bond" evidence="4">
    <location>
        <begin position="592"/>
        <end position="611"/>
    </location>
</feature>
<feature type="sequence conflict" description="In Ref. 1; BAC56599." evidence="8" ref="1">
    <original>DP</original>
    <variation>GR</variation>
    <location>
        <begin position="683"/>
        <end position="684"/>
    </location>
</feature>
<feature type="sequence conflict" description="In Ref. 3; BAC34692." evidence="8" ref="3">
    <original>V</original>
    <variation>E</variation>
    <location>
        <position position="1607"/>
    </location>
</feature>